<keyword id="KW-0119">Carbohydrate metabolism</keyword>
<keyword id="KW-0456">Lyase</keyword>
<keyword id="KW-1185">Reference proteome</keyword>
<reference key="1">
    <citation type="journal article" date="1996" name="DNA Res.">
        <title>Sequence analysis of the genome of the unicellular cyanobacterium Synechocystis sp. strain PCC6803. II. Sequence determination of the entire genome and assignment of potential protein-coding regions.</title>
        <authorList>
            <person name="Kaneko T."/>
            <person name="Sato S."/>
            <person name="Kotani H."/>
            <person name="Tanaka A."/>
            <person name="Asamizu E."/>
            <person name="Nakamura Y."/>
            <person name="Miyajima N."/>
            <person name="Hirosawa M."/>
            <person name="Sugiura M."/>
            <person name="Sasamoto S."/>
            <person name="Kimura T."/>
            <person name="Hosouchi T."/>
            <person name="Matsuno A."/>
            <person name="Muraki A."/>
            <person name="Nakazaki N."/>
            <person name="Naruo K."/>
            <person name="Okumura S."/>
            <person name="Shimpo S."/>
            <person name="Takeuchi C."/>
            <person name="Wada T."/>
            <person name="Watanabe A."/>
            <person name="Yamada M."/>
            <person name="Yasuda M."/>
            <person name="Tabata S."/>
        </authorList>
    </citation>
    <scope>NUCLEOTIDE SEQUENCE [LARGE SCALE GENOMIC DNA]</scope>
    <source>
        <strain>ATCC 27184 / PCC 6803 / Kazusa</strain>
    </source>
</reference>
<protein>
    <recommendedName>
        <fullName evidence="1">N-acetylmuramic acid 6-phosphate etherase</fullName>
        <shortName evidence="1">MurNAc-6-P etherase</shortName>
        <ecNumber evidence="1">4.2.1.126</ecNumber>
    </recommendedName>
    <alternativeName>
        <fullName evidence="1">N-acetylmuramic acid 6-phosphate hydrolase</fullName>
    </alternativeName>
    <alternativeName>
        <fullName evidence="1">N-acetylmuramic acid 6-phosphate lyase</fullName>
    </alternativeName>
</protein>
<accession>P73585</accession>
<evidence type="ECO:0000255" key="1">
    <source>
        <dbReference type="HAMAP-Rule" id="MF_00068"/>
    </source>
</evidence>
<sequence length="305" mass="32181">MPMEILEERGHLLTEQTNPQSQNLDQLSSLELVDLFNQQDQLTVTAIAGAREDLAAAIEIISDALAKGGRLFYIGAGTSGRLGVLDAVECPPTFCTPSELVQGILAGGASALLRSSEGLEDIAADGAQAIADHRITQLDVVVGITAGGTTPYVHGALDAARARGTKTIFIACVPESQAPCQADVNIRLLTGPEILAGSTRLKAGTVTKMALNILSTGAMVKLGKVYGNRMVDVAVTNRKLEDRAIRILRDLTDLNREEAAELLVASGQRVKLALLMHWSGLSAESAQAQLDRHGGNLRQAMDAAP</sequence>
<proteinExistence type="inferred from homology"/>
<dbReference type="EC" id="4.2.1.126" evidence="1"/>
<dbReference type="EMBL" id="BA000022">
    <property type="protein sequence ID" value="BAA17625.1"/>
    <property type="molecule type" value="Genomic_DNA"/>
</dbReference>
<dbReference type="PIR" id="S77291">
    <property type="entry name" value="S77291"/>
</dbReference>
<dbReference type="SMR" id="P73585"/>
<dbReference type="FunCoup" id="P73585">
    <property type="interactions" value="61"/>
</dbReference>
<dbReference type="IntAct" id="P73585">
    <property type="interactions" value="28"/>
</dbReference>
<dbReference type="STRING" id="1148.gene:10498492"/>
<dbReference type="PaxDb" id="1148-1652705"/>
<dbReference type="EnsemblBacteria" id="BAA17625">
    <property type="protein sequence ID" value="BAA17625"/>
    <property type="gene ID" value="BAA17625"/>
</dbReference>
<dbReference type="KEGG" id="syn:sll0861"/>
<dbReference type="eggNOG" id="COG2103">
    <property type="taxonomic scope" value="Bacteria"/>
</dbReference>
<dbReference type="InParanoid" id="P73585"/>
<dbReference type="PhylomeDB" id="P73585"/>
<dbReference type="UniPathway" id="UPA00342"/>
<dbReference type="Proteomes" id="UP000001425">
    <property type="component" value="Chromosome"/>
</dbReference>
<dbReference type="GO" id="GO:0097367">
    <property type="term" value="F:carbohydrate derivative binding"/>
    <property type="evidence" value="ECO:0007669"/>
    <property type="project" value="InterPro"/>
</dbReference>
<dbReference type="GO" id="GO:0016835">
    <property type="term" value="F:carbon-oxygen lyase activity"/>
    <property type="evidence" value="ECO:0000318"/>
    <property type="project" value="GO_Central"/>
</dbReference>
<dbReference type="GO" id="GO:0016803">
    <property type="term" value="F:ether hydrolase activity"/>
    <property type="evidence" value="ECO:0000318"/>
    <property type="project" value="GO_Central"/>
</dbReference>
<dbReference type="GO" id="GO:0046348">
    <property type="term" value="P:amino sugar catabolic process"/>
    <property type="evidence" value="ECO:0000318"/>
    <property type="project" value="GO_Central"/>
</dbReference>
<dbReference type="GO" id="GO:0097173">
    <property type="term" value="P:N-acetylmuramic acid catabolic process"/>
    <property type="evidence" value="ECO:0007669"/>
    <property type="project" value="UniProtKB-UniPathway"/>
</dbReference>
<dbReference type="GO" id="GO:0009254">
    <property type="term" value="P:peptidoglycan turnover"/>
    <property type="evidence" value="ECO:0000318"/>
    <property type="project" value="GO_Central"/>
</dbReference>
<dbReference type="CDD" id="cd05007">
    <property type="entry name" value="SIS_Etherase"/>
    <property type="match status" value="1"/>
</dbReference>
<dbReference type="FunFam" id="1.10.8.1080:FF:000001">
    <property type="entry name" value="N-acetylmuramic acid 6-phosphate etherase"/>
    <property type="match status" value="1"/>
</dbReference>
<dbReference type="FunFam" id="3.40.50.10490:FF:000014">
    <property type="entry name" value="N-acetylmuramic acid 6-phosphate etherase"/>
    <property type="match status" value="1"/>
</dbReference>
<dbReference type="Gene3D" id="1.10.8.1080">
    <property type="match status" value="1"/>
</dbReference>
<dbReference type="Gene3D" id="3.40.50.10490">
    <property type="entry name" value="Glucose-6-phosphate isomerase like protein, domain 1"/>
    <property type="match status" value="1"/>
</dbReference>
<dbReference type="HAMAP" id="MF_00068">
    <property type="entry name" value="MurQ"/>
    <property type="match status" value="1"/>
</dbReference>
<dbReference type="InterPro" id="IPR005488">
    <property type="entry name" value="Etherase_MurQ"/>
</dbReference>
<dbReference type="InterPro" id="IPR005486">
    <property type="entry name" value="Glucokinase_regulatory_CS"/>
</dbReference>
<dbReference type="InterPro" id="IPR040190">
    <property type="entry name" value="MURQ/GCKR"/>
</dbReference>
<dbReference type="InterPro" id="IPR001347">
    <property type="entry name" value="SIS_dom"/>
</dbReference>
<dbReference type="InterPro" id="IPR046348">
    <property type="entry name" value="SIS_dom_sf"/>
</dbReference>
<dbReference type="NCBIfam" id="TIGR00274">
    <property type="entry name" value="N-acetylmuramic acid 6-phosphate etherase"/>
    <property type="match status" value="1"/>
</dbReference>
<dbReference type="NCBIfam" id="NF003915">
    <property type="entry name" value="PRK05441.1"/>
    <property type="match status" value="1"/>
</dbReference>
<dbReference type="NCBIfam" id="NF009222">
    <property type="entry name" value="PRK12570.1"/>
    <property type="match status" value="1"/>
</dbReference>
<dbReference type="PANTHER" id="PTHR10088">
    <property type="entry name" value="GLUCOKINASE REGULATORY PROTEIN"/>
    <property type="match status" value="1"/>
</dbReference>
<dbReference type="PANTHER" id="PTHR10088:SF4">
    <property type="entry name" value="GLUCOKINASE REGULATORY PROTEIN"/>
    <property type="match status" value="1"/>
</dbReference>
<dbReference type="Pfam" id="PF20741">
    <property type="entry name" value="GKRP-like_C"/>
    <property type="match status" value="1"/>
</dbReference>
<dbReference type="Pfam" id="PF22645">
    <property type="entry name" value="GKRP_SIS_N"/>
    <property type="match status" value="1"/>
</dbReference>
<dbReference type="SUPFAM" id="SSF53697">
    <property type="entry name" value="SIS domain"/>
    <property type="match status" value="1"/>
</dbReference>
<dbReference type="PROSITE" id="PS01272">
    <property type="entry name" value="GCKR"/>
    <property type="match status" value="1"/>
</dbReference>
<dbReference type="PROSITE" id="PS51464">
    <property type="entry name" value="SIS"/>
    <property type="match status" value="1"/>
</dbReference>
<gene>
    <name evidence="1" type="primary">murQ</name>
    <name type="ordered locus">sll0861</name>
</gene>
<comment type="function">
    <text evidence="1">Specifically catalyzes the cleavage of the D-lactyl ether substituent of MurNAc 6-phosphate, producing GlcNAc 6-phosphate and D-lactate.</text>
</comment>
<comment type="catalytic activity">
    <reaction evidence="1">
        <text>N-acetyl-D-muramate 6-phosphate + H2O = N-acetyl-D-glucosamine 6-phosphate + (R)-lactate</text>
        <dbReference type="Rhea" id="RHEA:26410"/>
        <dbReference type="ChEBI" id="CHEBI:15377"/>
        <dbReference type="ChEBI" id="CHEBI:16004"/>
        <dbReference type="ChEBI" id="CHEBI:57513"/>
        <dbReference type="ChEBI" id="CHEBI:58722"/>
        <dbReference type="EC" id="4.2.1.126"/>
    </reaction>
</comment>
<comment type="pathway">
    <text evidence="1">Amino-sugar metabolism; N-acetylmuramate degradation.</text>
</comment>
<comment type="subunit">
    <text evidence="1">Homodimer.</text>
</comment>
<comment type="miscellaneous">
    <text evidence="1">A lyase-type mechanism (elimination/hydration) is suggested for the cleavage of the lactyl ether bond of MurNAc 6-phosphate, with the formation of an alpha,beta-unsaturated aldehyde intermediate with (E)-stereochemistry, followed by the syn addition of water to give product.</text>
</comment>
<comment type="similarity">
    <text evidence="1">Belongs to the GCKR-like family. MurNAc-6-P etherase subfamily.</text>
</comment>
<feature type="chain" id="PRO_0000214839" description="N-acetylmuramic acid 6-phosphate etherase">
    <location>
        <begin position="1"/>
        <end position="305"/>
    </location>
</feature>
<feature type="domain" description="SIS" evidence="1">
    <location>
        <begin position="61"/>
        <end position="224"/>
    </location>
</feature>
<feature type="active site" description="Proton donor" evidence="1">
    <location>
        <position position="89"/>
    </location>
</feature>
<feature type="active site" evidence="1">
    <location>
        <position position="120"/>
    </location>
</feature>
<name>MURQ_SYNY3</name>
<organism>
    <name type="scientific">Synechocystis sp. (strain ATCC 27184 / PCC 6803 / Kazusa)</name>
    <dbReference type="NCBI Taxonomy" id="1111708"/>
    <lineage>
        <taxon>Bacteria</taxon>
        <taxon>Bacillati</taxon>
        <taxon>Cyanobacteriota</taxon>
        <taxon>Cyanophyceae</taxon>
        <taxon>Synechococcales</taxon>
        <taxon>Merismopediaceae</taxon>
        <taxon>Synechocystis</taxon>
    </lineage>
</organism>